<dbReference type="EMBL" id="AF543743">
    <property type="protein sequence ID" value="AAQ11861.1"/>
    <property type="molecule type" value="Genomic_DNA"/>
</dbReference>
<dbReference type="GO" id="GO:0009507">
    <property type="term" value="C:chloroplast"/>
    <property type="evidence" value="ECO:0007669"/>
    <property type="project" value="UniProtKB-SubCell"/>
</dbReference>
<dbReference type="GO" id="GO:0003723">
    <property type="term" value="F:RNA binding"/>
    <property type="evidence" value="ECO:0007669"/>
    <property type="project" value="UniProtKB-KW"/>
</dbReference>
<dbReference type="GO" id="GO:0006397">
    <property type="term" value="P:mRNA processing"/>
    <property type="evidence" value="ECO:0007669"/>
    <property type="project" value="UniProtKB-KW"/>
</dbReference>
<dbReference type="GO" id="GO:0008380">
    <property type="term" value="P:RNA splicing"/>
    <property type="evidence" value="ECO:0007669"/>
    <property type="project" value="UniProtKB-UniRule"/>
</dbReference>
<dbReference type="GO" id="GO:0008033">
    <property type="term" value="P:tRNA processing"/>
    <property type="evidence" value="ECO:0007669"/>
    <property type="project" value="UniProtKB-KW"/>
</dbReference>
<dbReference type="HAMAP" id="MF_01390">
    <property type="entry name" value="MatK"/>
    <property type="match status" value="1"/>
</dbReference>
<dbReference type="InterPro" id="IPR024937">
    <property type="entry name" value="Domain_X"/>
</dbReference>
<dbReference type="InterPro" id="IPR002866">
    <property type="entry name" value="Maturase_MatK"/>
</dbReference>
<dbReference type="InterPro" id="IPR024942">
    <property type="entry name" value="Maturase_MatK_N"/>
</dbReference>
<dbReference type="PANTHER" id="PTHR34811">
    <property type="entry name" value="MATURASE K"/>
    <property type="match status" value="1"/>
</dbReference>
<dbReference type="PANTHER" id="PTHR34811:SF1">
    <property type="entry name" value="MATURASE K"/>
    <property type="match status" value="1"/>
</dbReference>
<dbReference type="Pfam" id="PF01348">
    <property type="entry name" value="Intron_maturas2"/>
    <property type="match status" value="1"/>
</dbReference>
<dbReference type="Pfam" id="PF01824">
    <property type="entry name" value="MatK_N"/>
    <property type="match status" value="2"/>
</dbReference>
<protein>
    <recommendedName>
        <fullName evidence="1">Maturase K</fullName>
    </recommendedName>
    <alternativeName>
        <fullName evidence="1">Intron maturase</fullName>
    </alternativeName>
</protein>
<geneLocation type="chloroplast"/>
<sequence length="470" mass="56120">MEELQGYLERDRFRKQHFLYPLLFKEYIYTFAHDRGLNGSIFYESAEIFGYDNKSSSVLVKRLIIRMYQQNYLIYSVNDSNQNRFVGHNNYLYFHFYSQMILEVFTVIVEIPFLLRLVSSLERKIPKSQNLNLRSIHSIFPFLHEYPNWNSLITPNNSIFLFSKENKRLFRFLHNSYVSECEFVLVFLRKQSSYLRLTSSGAFLERTHFYGKIEHLHLIVVRRNYFQKTLWFFKDPFMHYVRYQGKAILVSKGTHLLMKKWKCHLVNFWQYYFHFWSQPYRIHINQLSNCSFYFLGYLSSVLINPSVVRNQMLENSYLIDTVTKXFDTRVPVISFIGSLAKAKFCTVSGHPISKPIWTDLSDCDIIDRFGRICRNLSNYLSGSSKKQSLYRIKYILRFSCARTLARKHKSMVRAFLQRLGSGLLEEFFTEEEQVVSLIFPKANSFSLHGSHRERIWYLDITCINDLVNYS</sequence>
<organism>
    <name type="scientific">Nypa fruticans</name>
    <name type="common">Nypa palm</name>
    <dbReference type="NCBI Taxonomy" id="4718"/>
    <lineage>
        <taxon>Eukaryota</taxon>
        <taxon>Viridiplantae</taxon>
        <taxon>Streptophyta</taxon>
        <taxon>Embryophyta</taxon>
        <taxon>Tracheophyta</taxon>
        <taxon>Spermatophyta</taxon>
        <taxon>Magnoliopsida</taxon>
        <taxon>Liliopsida</taxon>
        <taxon>Arecaceae</taxon>
        <taxon>Nypoideae</taxon>
        <taxon>Nypa</taxon>
    </lineage>
</organism>
<proteinExistence type="inferred from homology"/>
<keyword id="KW-0150">Chloroplast</keyword>
<keyword id="KW-0507">mRNA processing</keyword>
<keyword id="KW-0934">Plastid</keyword>
<keyword id="KW-0694">RNA-binding</keyword>
<keyword id="KW-0819">tRNA processing</keyword>
<evidence type="ECO:0000255" key="1">
    <source>
        <dbReference type="HAMAP-Rule" id="MF_01390"/>
    </source>
</evidence>
<reference key="1">
    <citation type="submission" date="2002-09" db="EMBL/GenBank/DDBJ databases">
        <title>Rapidly evolving DNA and deep level phylogenetics: a case study in basal angiosperms.</title>
        <authorList>
            <person name="Hilu K.W."/>
            <person name="Mueller K.F."/>
            <person name="Borsch T."/>
        </authorList>
    </citation>
    <scope>NUCLEOTIDE SEQUENCE [GENOMIC DNA]</scope>
</reference>
<gene>
    <name evidence="1" type="primary">matK</name>
</gene>
<comment type="function">
    <text evidence="1">Usually encoded in the trnK tRNA gene intron. Probably assists in splicing its own and other chloroplast group II introns.</text>
</comment>
<comment type="subcellular location">
    <subcellularLocation>
        <location>Plastid</location>
        <location>Chloroplast</location>
    </subcellularLocation>
</comment>
<comment type="similarity">
    <text evidence="1">Belongs to the intron maturase 2 family. MatK subfamily.</text>
</comment>
<name>MATK_NYPFR</name>
<accession>Q717X1</accession>
<feature type="chain" id="PRO_0000143553" description="Maturase K">
    <location>
        <begin position="1"/>
        <end position="470"/>
    </location>
</feature>